<gene>
    <name type="ordered locus">MIMI_R259</name>
</gene>
<sequence length="292" mass="34518">MSEISNIINEPIGDRMKRFEAKYDFKIEPQNYFCVRLDGNKFSNFTRKFEKPYDVRFSQAMVMTTIDTINKFGARTGFTQSDEITLIFDKAIPDDFKKHITYNHLFNGRVSKLLSIVSSYVSVRFNHHFRLLTSNLTNIYSQETLELINGGTAIFDARILEFDENNKYEMLNHLIWRSVKDCYRNAVQTYAHHIFGPAKIKYLNREQMIQLIEENTNIVWSNIPLWQKYGVIIKKQLIKTDNVKNSVITSSFKVFSLKLSYNDTMLKFLFDKYFELDKISEYQLEDYPLSII</sequence>
<accession>Q5UP24</accession>
<proteinExistence type="predicted"/>
<keyword id="KW-1185">Reference proteome</keyword>
<dbReference type="EMBL" id="AY653733">
    <property type="protein sequence ID" value="AAV50531.1"/>
    <property type="molecule type" value="Genomic_DNA"/>
</dbReference>
<dbReference type="SMR" id="Q5UP24"/>
<dbReference type="KEGG" id="vg:9924868"/>
<dbReference type="OrthoDB" id="8398at10239"/>
<dbReference type="Proteomes" id="UP000001134">
    <property type="component" value="Genome"/>
</dbReference>
<dbReference type="GO" id="GO:0000287">
    <property type="term" value="F:magnesium ion binding"/>
    <property type="evidence" value="ECO:0007669"/>
    <property type="project" value="InterPro"/>
</dbReference>
<dbReference type="GO" id="GO:0008193">
    <property type="term" value="F:tRNA guanylyltransferase activity"/>
    <property type="evidence" value="ECO:0007669"/>
    <property type="project" value="InterPro"/>
</dbReference>
<dbReference type="GO" id="GO:0006400">
    <property type="term" value="P:tRNA modification"/>
    <property type="evidence" value="ECO:0007669"/>
    <property type="project" value="InterPro"/>
</dbReference>
<dbReference type="Gene3D" id="3.30.70.3000">
    <property type="match status" value="1"/>
</dbReference>
<dbReference type="InterPro" id="IPR024956">
    <property type="entry name" value="tRNAHis_GuaTrfase_cat"/>
</dbReference>
<dbReference type="InterPro" id="IPR007537">
    <property type="entry name" value="tRNAHis_GuaTrfase_Thg1"/>
</dbReference>
<dbReference type="InterPro" id="IPR038469">
    <property type="entry name" value="tRNAHis_GuaTrfase_Thg1_sf"/>
</dbReference>
<dbReference type="PANTHER" id="PTHR12729">
    <property type="entry name" value="TRNA(HIS) GUANYLYLTRANSFERASE-RELATED"/>
    <property type="match status" value="1"/>
</dbReference>
<dbReference type="PANTHER" id="PTHR12729:SF1">
    <property type="entry name" value="TRNAHIS GUANYLYLTRANSFERASE CATALYTIC DOMAIN-CONTAINING PROTEIN"/>
    <property type="match status" value="1"/>
</dbReference>
<dbReference type="Pfam" id="PF04446">
    <property type="entry name" value="Thg1"/>
    <property type="match status" value="1"/>
</dbReference>
<protein>
    <recommendedName>
        <fullName>Uncharacterized protein R259</fullName>
    </recommendedName>
</protein>
<name>YR259_MIMIV</name>
<organismHost>
    <name type="scientific">Acanthamoeba polyphaga</name>
    <name type="common">Amoeba</name>
    <dbReference type="NCBI Taxonomy" id="5757"/>
</organismHost>
<organism>
    <name type="scientific">Acanthamoeba polyphaga mimivirus</name>
    <name type="common">APMV</name>
    <dbReference type="NCBI Taxonomy" id="212035"/>
    <lineage>
        <taxon>Viruses</taxon>
        <taxon>Varidnaviria</taxon>
        <taxon>Bamfordvirae</taxon>
        <taxon>Nucleocytoviricota</taxon>
        <taxon>Megaviricetes</taxon>
        <taxon>Imitervirales</taxon>
        <taxon>Mimiviridae</taxon>
        <taxon>Megamimivirinae</taxon>
        <taxon>Mimivirus</taxon>
        <taxon>Mimivirus bradfordmassiliense</taxon>
    </lineage>
</organism>
<feature type="chain" id="PRO_0000071254" description="Uncharacterized protein R259">
    <location>
        <begin position="1"/>
        <end position="292"/>
    </location>
</feature>
<reference key="1">
    <citation type="journal article" date="2004" name="Science">
        <title>The 1.2-megabase genome sequence of Mimivirus.</title>
        <authorList>
            <person name="Raoult D."/>
            <person name="Audic S."/>
            <person name="Robert C."/>
            <person name="Abergel C."/>
            <person name="Renesto P."/>
            <person name="Ogata H."/>
            <person name="La Scola B."/>
            <person name="Susan M."/>
            <person name="Claverie J.-M."/>
        </authorList>
    </citation>
    <scope>NUCLEOTIDE SEQUENCE [LARGE SCALE GENOMIC DNA]</scope>
    <source>
        <strain>Rowbotham-Bradford</strain>
    </source>
</reference>